<comment type="function">
    <text evidence="1">Catalyzes the reversible conversion of 2-phosphoglycerate (2-PG) into phosphoenolpyruvate (PEP). It is essential for the degradation of carbohydrates via glycolysis.</text>
</comment>
<comment type="catalytic activity">
    <reaction evidence="1">
        <text>(2R)-2-phosphoglycerate = phosphoenolpyruvate + H2O</text>
        <dbReference type="Rhea" id="RHEA:10164"/>
        <dbReference type="ChEBI" id="CHEBI:15377"/>
        <dbReference type="ChEBI" id="CHEBI:58289"/>
        <dbReference type="ChEBI" id="CHEBI:58702"/>
        <dbReference type="EC" id="4.2.1.11"/>
    </reaction>
</comment>
<comment type="cofactor">
    <cofactor evidence="1">
        <name>Mg(2+)</name>
        <dbReference type="ChEBI" id="CHEBI:18420"/>
    </cofactor>
    <text evidence="1">Binds a second Mg(2+) ion via substrate during catalysis.</text>
</comment>
<comment type="pathway">
    <text evidence="1">Carbohydrate degradation; glycolysis; pyruvate from D-glyceraldehyde 3-phosphate: step 4/5.</text>
</comment>
<comment type="subcellular location">
    <subcellularLocation>
        <location evidence="1">Cytoplasm</location>
    </subcellularLocation>
    <subcellularLocation>
        <location evidence="1">Secreted</location>
    </subcellularLocation>
    <subcellularLocation>
        <location evidence="1">Cell surface</location>
    </subcellularLocation>
    <text evidence="1">Fractions of enolase are present in both the cytoplasm and on the cell surface.</text>
</comment>
<comment type="similarity">
    <text evidence="1">Belongs to the enolase family.</text>
</comment>
<keyword id="KW-0963">Cytoplasm</keyword>
<keyword id="KW-0324">Glycolysis</keyword>
<keyword id="KW-0456">Lyase</keyword>
<keyword id="KW-0460">Magnesium</keyword>
<keyword id="KW-0479">Metal-binding</keyword>
<keyword id="KW-1185">Reference proteome</keyword>
<keyword id="KW-0964">Secreted</keyword>
<proteinExistence type="inferred from homology"/>
<protein>
    <recommendedName>
        <fullName evidence="1">Enolase</fullName>
        <ecNumber evidence="1">4.2.1.11</ecNumber>
    </recommendedName>
    <alternativeName>
        <fullName evidence="1">2-phospho-D-glycerate hydro-lyase</fullName>
    </alternativeName>
    <alternativeName>
        <fullName evidence="1">2-phosphoglycerate dehydratase</fullName>
    </alternativeName>
</protein>
<organism>
    <name type="scientific">Cytophaga hutchinsonii (strain ATCC 33406 / DSM 1761 / CIP 103989 / NBRC 15051 / NCIMB 9469 / D465)</name>
    <dbReference type="NCBI Taxonomy" id="269798"/>
    <lineage>
        <taxon>Bacteria</taxon>
        <taxon>Pseudomonadati</taxon>
        <taxon>Bacteroidota</taxon>
        <taxon>Cytophagia</taxon>
        <taxon>Cytophagales</taxon>
        <taxon>Cytophagaceae</taxon>
        <taxon>Cytophaga</taxon>
    </lineage>
</organism>
<name>ENO_CYTH3</name>
<accession>Q11QE1</accession>
<evidence type="ECO:0000255" key="1">
    <source>
        <dbReference type="HAMAP-Rule" id="MF_00318"/>
    </source>
</evidence>
<feature type="chain" id="PRO_0000267023" description="Enolase">
    <location>
        <begin position="1"/>
        <end position="427"/>
    </location>
</feature>
<feature type="active site" description="Proton donor" evidence="1">
    <location>
        <position position="205"/>
    </location>
</feature>
<feature type="active site" description="Proton acceptor" evidence="1">
    <location>
        <position position="340"/>
    </location>
</feature>
<feature type="binding site" evidence="1">
    <location>
        <position position="163"/>
    </location>
    <ligand>
        <name>(2R)-2-phosphoglycerate</name>
        <dbReference type="ChEBI" id="CHEBI:58289"/>
    </ligand>
</feature>
<feature type="binding site" evidence="1">
    <location>
        <position position="242"/>
    </location>
    <ligand>
        <name>Mg(2+)</name>
        <dbReference type="ChEBI" id="CHEBI:18420"/>
    </ligand>
</feature>
<feature type="binding site" evidence="1">
    <location>
        <position position="288"/>
    </location>
    <ligand>
        <name>Mg(2+)</name>
        <dbReference type="ChEBI" id="CHEBI:18420"/>
    </ligand>
</feature>
<feature type="binding site" evidence="1">
    <location>
        <position position="315"/>
    </location>
    <ligand>
        <name>Mg(2+)</name>
        <dbReference type="ChEBI" id="CHEBI:18420"/>
    </ligand>
</feature>
<feature type="binding site" evidence="1">
    <location>
        <position position="340"/>
    </location>
    <ligand>
        <name>(2R)-2-phosphoglycerate</name>
        <dbReference type="ChEBI" id="CHEBI:58289"/>
    </ligand>
</feature>
<feature type="binding site" evidence="1">
    <location>
        <position position="369"/>
    </location>
    <ligand>
        <name>(2R)-2-phosphoglycerate</name>
        <dbReference type="ChEBI" id="CHEBI:58289"/>
    </ligand>
</feature>
<feature type="binding site" evidence="1">
    <location>
        <position position="370"/>
    </location>
    <ligand>
        <name>(2R)-2-phosphoglycerate</name>
        <dbReference type="ChEBI" id="CHEBI:58289"/>
    </ligand>
</feature>
<feature type="binding site" evidence="1">
    <location>
        <position position="391"/>
    </location>
    <ligand>
        <name>(2R)-2-phosphoglycerate</name>
        <dbReference type="ChEBI" id="CHEBI:58289"/>
    </ligand>
</feature>
<reference key="1">
    <citation type="journal article" date="2007" name="Appl. Environ. Microbiol.">
        <title>Genome sequence of the cellulolytic gliding bacterium Cytophaga hutchinsonii.</title>
        <authorList>
            <person name="Xie G."/>
            <person name="Bruce D.C."/>
            <person name="Challacombe J.F."/>
            <person name="Chertkov O."/>
            <person name="Detter J.C."/>
            <person name="Gilna P."/>
            <person name="Han C.S."/>
            <person name="Lucas S."/>
            <person name="Misra M."/>
            <person name="Myers G.L."/>
            <person name="Richardson P."/>
            <person name="Tapia R."/>
            <person name="Thayer N."/>
            <person name="Thompson L.S."/>
            <person name="Brettin T.S."/>
            <person name="Henrissat B."/>
            <person name="Wilson D.B."/>
            <person name="McBride M.J."/>
        </authorList>
    </citation>
    <scope>NUCLEOTIDE SEQUENCE [LARGE SCALE GENOMIC DNA]</scope>
    <source>
        <strain>ATCC 33406 / DSM 1761 / JCM 20678 / CIP 103989 / IAM 12607 / NBRC 15051 / NCIMB 9469 / D465</strain>
    </source>
</reference>
<sequence>MSLIEEIVARQIFDSRGNPTIEVDVITENGLIGRAAVPSGASTGKHEAVELRDNDKSIYMGKSVLKAVANVNDIIAPELIGSHVFEQNLIDRLMIDLDGTANKGKLGANAILGVSLALAKAAAQEAGLPLYRYVGGVSANTLPVPMMNIINGGSHADNSIDFQEFMIMPTGAKSFTEAMRMGSEIFHNLAKVLKSKGMSTNVGDEGGFAPNIASNEDALITVIQAIEAAGYRPGEDVMIAFDAASSEFYDSETKLYHFKKSTGDKLTSSQMASYWADLVKRYPIVSIEDGMDEDDWSGWAELTKLVGDKVQLVGDDLFVTNVSRLQQGIDQGIANSILVKVNQIGSLTETISAVNLAKRNSYTSVMSHRSGETEDNTIADLAVALNCGQIKTGSCSRSDRMAKYNQLLRIEEELGEAAYFPGKNMRK</sequence>
<gene>
    <name evidence="1" type="primary">eno</name>
    <name type="ordered locus">CHU_3133</name>
</gene>
<dbReference type="EC" id="4.2.1.11" evidence="1"/>
<dbReference type="EMBL" id="CP000383">
    <property type="protein sequence ID" value="ABG60373.1"/>
    <property type="molecule type" value="Genomic_DNA"/>
</dbReference>
<dbReference type="RefSeq" id="WP_011586482.1">
    <property type="nucleotide sequence ID" value="NC_008255.1"/>
</dbReference>
<dbReference type="SMR" id="Q11QE1"/>
<dbReference type="STRING" id="269798.CHU_3133"/>
<dbReference type="KEGG" id="chu:CHU_3133"/>
<dbReference type="eggNOG" id="COG0148">
    <property type="taxonomic scope" value="Bacteria"/>
</dbReference>
<dbReference type="HOGENOM" id="CLU_031223_2_1_10"/>
<dbReference type="OrthoDB" id="9804716at2"/>
<dbReference type="UniPathway" id="UPA00109">
    <property type="reaction ID" value="UER00187"/>
</dbReference>
<dbReference type="Proteomes" id="UP000001822">
    <property type="component" value="Chromosome"/>
</dbReference>
<dbReference type="GO" id="GO:0009986">
    <property type="term" value="C:cell surface"/>
    <property type="evidence" value="ECO:0007669"/>
    <property type="project" value="UniProtKB-SubCell"/>
</dbReference>
<dbReference type="GO" id="GO:0005576">
    <property type="term" value="C:extracellular region"/>
    <property type="evidence" value="ECO:0007669"/>
    <property type="project" value="UniProtKB-SubCell"/>
</dbReference>
<dbReference type="GO" id="GO:0000015">
    <property type="term" value="C:phosphopyruvate hydratase complex"/>
    <property type="evidence" value="ECO:0007669"/>
    <property type="project" value="InterPro"/>
</dbReference>
<dbReference type="GO" id="GO:0000287">
    <property type="term" value="F:magnesium ion binding"/>
    <property type="evidence" value="ECO:0007669"/>
    <property type="project" value="UniProtKB-UniRule"/>
</dbReference>
<dbReference type="GO" id="GO:0004634">
    <property type="term" value="F:phosphopyruvate hydratase activity"/>
    <property type="evidence" value="ECO:0007669"/>
    <property type="project" value="UniProtKB-UniRule"/>
</dbReference>
<dbReference type="GO" id="GO:0006096">
    <property type="term" value="P:glycolytic process"/>
    <property type="evidence" value="ECO:0007669"/>
    <property type="project" value="UniProtKB-UniRule"/>
</dbReference>
<dbReference type="CDD" id="cd03313">
    <property type="entry name" value="enolase"/>
    <property type="match status" value="1"/>
</dbReference>
<dbReference type="FunFam" id="3.20.20.120:FF:000001">
    <property type="entry name" value="Enolase"/>
    <property type="match status" value="1"/>
</dbReference>
<dbReference type="FunFam" id="3.30.390.10:FF:000001">
    <property type="entry name" value="Enolase"/>
    <property type="match status" value="1"/>
</dbReference>
<dbReference type="Gene3D" id="3.20.20.120">
    <property type="entry name" value="Enolase-like C-terminal domain"/>
    <property type="match status" value="1"/>
</dbReference>
<dbReference type="Gene3D" id="3.30.390.10">
    <property type="entry name" value="Enolase-like, N-terminal domain"/>
    <property type="match status" value="1"/>
</dbReference>
<dbReference type="HAMAP" id="MF_00318">
    <property type="entry name" value="Enolase"/>
    <property type="match status" value="1"/>
</dbReference>
<dbReference type="InterPro" id="IPR000941">
    <property type="entry name" value="Enolase"/>
</dbReference>
<dbReference type="InterPro" id="IPR036849">
    <property type="entry name" value="Enolase-like_C_sf"/>
</dbReference>
<dbReference type="InterPro" id="IPR029017">
    <property type="entry name" value="Enolase-like_N"/>
</dbReference>
<dbReference type="InterPro" id="IPR020810">
    <property type="entry name" value="Enolase_C"/>
</dbReference>
<dbReference type="InterPro" id="IPR020809">
    <property type="entry name" value="Enolase_CS"/>
</dbReference>
<dbReference type="InterPro" id="IPR020811">
    <property type="entry name" value="Enolase_N"/>
</dbReference>
<dbReference type="NCBIfam" id="TIGR01060">
    <property type="entry name" value="eno"/>
    <property type="match status" value="1"/>
</dbReference>
<dbReference type="PANTHER" id="PTHR11902">
    <property type="entry name" value="ENOLASE"/>
    <property type="match status" value="1"/>
</dbReference>
<dbReference type="PANTHER" id="PTHR11902:SF1">
    <property type="entry name" value="ENOLASE"/>
    <property type="match status" value="1"/>
</dbReference>
<dbReference type="Pfam" id="PF00113">
    <property type="entry name" value="Enolase_C"/>
    <property type="match status" value="1"/>
</dbReference>
<dbReference type="Pfam" id="PF03952">
    <property type="entry name" value="Enolase_N"/>
    <property type="match status" value="1"/>
</dbReference>
<dbReference type="PIRSF" id="PIRSF001400">
    <property type="entry name" value="Enolase"/>
    <property type="match status" value="1"/>
</dbReference>
<dbReference type="PRINTS" id="PR00148">
    <property type="entry name" value="ENOLASE"/>
</dbReference>
<dbReference type="SFLD" id="SFLDF00002">
    <property type="entry name" value="enolase"/>
    <property type="match status" value="1"/>
</dbReference>
<dbReference type="SFLD" id="SFLDG00178">
    <property type="entry name" value="enolase"/>
    <property type="match status" value="1"/>
</dbReference>
<dbReference type="SMART" id="SM01192">
    <property type="entry name" value="Enolase_C"/>
    <property type="match status" value="1"/>
</dbReference>
<dbReference type="SMART" id="SM01193">
    <property type="entry name" value="Enolase_N"/>
    <property type="match status" value="1"/>
</dbReference>
<dbReference type="SUPFAM" id="SSF51604">
    <property type="entry name" value="Enolase C-terminal domain-like"/>
    <property type="match status" value="1"/>
</dbReference>
<dbReference type="SUPFAM" id="SSF54826">
    <property type="entry name" value="Enolase N-terminal domain-like"/>
    <property type="match status" value="1"/>
</dbReference>
<dbReference type="PROSITE" id="PS00164">
    <property type="entry name" value="ENOLASE"/>
    <property type="match status" value="1"/>
</dbReference>